<evidence type="ECO:0000255" key="1">
    <source>
        <dbReference type="HAMAP-Rule" id="MF_04203"/>
    </source>
</evidence>
<evidence type="ECO:0000255" key="2">
    <source>
        <dbReference type="PROSITE-ProRule" id="PRU01275"/>
    </source>
</evidence>
<reference key="1">
    <citation type="journal article" date="2000" name="Arch. Virol.">
        <title>Evidence of genetic diversity generated by recombination among avian coronavirus IBV.</title>
        <authorList>
            <person name="Lee C.-W."/>
            <person name="Jackwood M.W."/>
        </authorList>
    </citation>
    <scope>NUCLEOTIDE SEQUENCE [GENOMIC RNA]</scope>
</reference>
<organismHost>
    <name type="scientific">Gallus gallus</name>
    <name type="common">Chicken</name>
    <dbReference type="NCBI Taxonomy" id="9031"/>
</organismHost>
<keyword id="KW-0325">Glycoprotein</keyword>
<keyword id="KW-1040">Host Golgi apparatus</keyword>
<keyword id="KW-1043">Host membrane</keyword>
<keyword id="KW-0472">Membrane</keyword>
<keyword id="KW-0812">Transmembrane</keyword>
<keyword id="KW-1133">Transmembrane helix</keyword>
<keyword id="KW-0261">Viral envelope protein</keyword>
<keyword id="KW-0468">Viral matrix protein</keyword>
<keyword id="KW-0946">Virion</keyword>
<accession>P69603</accession>
<accession>Q9J4A6</accession>
<sequence>MSNETNCTLDFEQSVELFKEYNLFITAFLLFLTIILQYGYATRSKFIYILKMIVLWCFWPLNIAVGVISCIYPPNTGGLVAAIILTVFACLSFVGYWIQSIRLFKRCRSWWSFNPESNAVGSILLTNGQQCNFAIESVPMVLSPIIKNGVLYCEGQWLAKCEPDHLPKDIFVCTPDRRNIYRMVQKYIGDQSGNKKRFATFVYAKQSVDTGELESVATGGSSLYT</sequence>
<dbReference type="EMBL" id="AF203004">
    <property type="protein sequence ID" value="AAF69120.1"/>
    <property type="molecule type" value="Genomic_RNA"/>
</dbReference>
<dbReference type="SMR" id="P69603"/>
<dbReference type="GO" id="GO:0044178">
    <property type="term" value="C:host cell Golgi membrane"/>
    <property type="evidence" value="ECO:0007669"/>
    <property type="project" value="UniProtKB-SubCell"/>
</dbReference>
<dbReference type="GO" id="GO:0016020">
    <property type="term" value="C:membrane"/>
    <property type="evidence" value="ECO:0007669"/>
    <property type="project" value="UniProtKB-UniRule"/>
</dbReference>
<dbReference type="GO" id="GO:0019031">
    <property type="term" value="C:viral envelope"/>
    <property type="evidence" value="ECO:0007669"/>
    <property type="project" value="UniProtKB-UniRule"/>
</dbReference>
<dbReference type="GO" id="GO:0055036">
    <property type="term" value="C:virion membrane"/>
    <property type="evidence" value="ECO:0007669"/>
    <property type="project" value="UniProtKB-SubCell"/>
</dbReference>
<dbReference type="GO" id="GO:0039660">
    <property type="term" value="F:structural constituent of virion"/>
    <property type="evidence" value="ECO:0007669"/>
    <property type="project" value="UniProtKB-UniRule"/>
</dbReference>
<dbReference type="CDD" id="cd21566">
    <property type="entry name" value="gammaCoV_M"/>
    <property type="match status" value="1"/>
</dbReference>
<dbReference type="HAMAP" id="MF_04203">
    <property type="entry name" value="GAMMA_CORONA_M"/>
    <property type="match status" value="1"/>
</dbReference>
<dbReference type="InterPro" id="IPR042550">
    <property type="entry name" value="GAMMA_CORONA_M"/>
</dbReference>
<dbReference type="InterPro" id="IPR002574">
    <property type="entry name" value="M_CoV"/>
</dbReference>
<dbReference type="Pfam" id="PF01635">
    <property type="entry name" value="CoV_M"/>
    <property type="match status" value="1"/>
</dbReference>
<dbReference type="PROSITE" id="PS51927">
    <property type="entry name" value="COV_M"/>
    <property type="match status" value="1"/>
</dbReference>
<feature type="chain" id="PRO_0000106051" description="Membrane protein">
    <location>
        <begin position="1"/>
        <end position="225"/>
    </location>
</feature>
<feature type="topological domain" description="Virion surface" evidence="1">
    <location>
        <begin position="1"/>
        <end position="20"/>
    </location>
</feature>
<feature type="transmembrane region" description="Helical" evidence="1">
    <location>
        <begin position="21"/>
        <end position="41"/>
    </location>
</feature>
<feature type="topological domain" description="Intravirion" evidence="1">
    <location>
        <begin position="42"/>
        <end position="51"/>
    </location>
</feature>
<feature type="transmembrane region" description="Helical" evidence="1">
    <location>
        <begin position="52"/>
        <end position="72"/>
    </location>
</feature>
<feature type="topological domain" description="Virion surface" evidence="1">
    <location>
        <begin position="73"/>
        <end position="77"/>
    </location>
</feature>
<feature type="transmembrane region" description="Helical" evidence="1">
    <location>
        <begin position="78"/>
        <end position="98"/>
    </location>
</feature>
<feature type="topological domain" description="Intravirion" evidence="1">
    <location>
        <begin position="99"/>
        <end position="225"/>
    </location>
</feature>
<organism>
    <name type="scientific">Avian infectious bronchitis virus (strain D1466)</name>
    <name type="common">IBV</name>
    <dbReference type="NCBI Taxonomy" id="231472"/>
    <lineage>
        <taxon>Viruses</taxon>
        <taxon>Riboviria</taxon>
        <taxon>Orthornavirae</taxon>
        <taxon>Pisuviricota</taxon>
        <taxon>Pisoniviricetes</taxon>
        <taxon>Nidovirales</taxon>
        <taxon>Cornidovirineae</taxon>
        <taxon>Coronaviridae</taxon>
        <taxon>Orthocoronavirinae</taxon>
        <taxon>Gammacoronavirus</taxon>
        <taxon>Igacovirus</taxon>
        <taxon>Avian coronavirus</taxon>
    </lineage>
</organism>
<gene>
    <name evidence="1" type="primary">M</name>
</gene>
<name>VME1_IBVD1</name>
<protein>
    <recommendedName>
        <fullName evidence="1">Membrane protein</fullName>
        <shortName evidence="1">M protein</shortName>
    </recommendedName>
    <alternativeName>
        <fullName evidence="1">E1 glycoprotein</fullName>
    </alternativeName>
    <alternativeName>
        <fullName evidence="1">Matrix glycoprotein</fullName>
    </alternativeName>
    <alternativeName>
        <fullName evidence="1">Membrane glycoprotein</fullName>
    </alternativeName>
</protein>
<comment type="function">
    <text evidence="1 2">Component of the viral envelope that plays a central role in virus morphogenesis and assembly via its interactions with other viral proteins.</text>
</comment>
<comment type="subunit">
    <text evidence="1 2">Homomultimer. Interacts with envelope E protein in the budding compartment of the host cell, which is located between endoplasmic reticulum and the Golgi complex. Forms a complex with HE and S proteins. Interacts with nucleocapsid N protein. This interaction probably participates in RNA packaging into the virus.</text>
</comment>
<comment type="subcellular location">
    <subcellularLocation>
        <location evidence="1">Virion membrane</location>
        <topology evidence="1">Multi-pass membrane protein</topology>
    </subcellularLocation>
    <subcellularLocation>
        <location evidence="1">Host Golgi apparatus membrane</location>
        <topology evidence="1">Multi-pass membrane protein</topology>
    </subcellularLocation>
    <text evidence="1">Largely embedded in the lipid bilayer.</text>
</comment>
<comment type="similarity">
    <text evidence="1">Belongs to the gammacoronaviruses M protein family.</text>
</comment>
<proteinExistence type="inferred from homology"/>